<protein>
    <recommendedName>
        <fullName evidence="1">4-hydroxy-3-methylbut-2-enyl diphosphate reductase</fullName>
        <shortName evidence="1">HMBPP reductase</shortName>
        <ecNumber evidence="1">1.17.7.4</ecNumber>
    </recommendedName>
</protein>
<gene>
    <name evidence="1" type="primary">ispH</name>
    <name type="ordered locus">sync_0292</name>
</gene>
<comment type="function">
    <text evidence="1">Catalyzes the conversion of 1-hydroxy-2-methyl-2-(E)-butenyl 4-diphosphate (HMBPP) into a mixture of isopentenyl diphosphate (IPP) and dimethylallyl diphosphate (DMAPP). Acts in the terminal step of the DOXP/MEP pathway for isoprenoid precursor biosynthesis.</text>
</comment>
<comment type="catalytic activity">
    <reaction evidence="1">
        <text>isopentenyl diphosphate + 2 oxidized [2Fe-2S]-[ferredoxin] + H2O = (2E)-4-hydroxy-3-methylbut-2-enyl diphosphate + 2 reduced [2Fe-2S]-[ferredoxin] + 2 H(+)</text>
        <dbReference type="Rhea" id="RHEA:24488"/>
        <dbReference type="Rhea" id="RHEA-COMP:10000"/>
        <dbReference type="Rhea" id="RHEA-COMP:10001"/>
        <dbReference type="ChEBI" id="CHEBI:15377"/>
        <dbReference type="ChEBI" id="CHEBI:15378"/>
        <dbReference type="ChEBI" id="CHEBI:33737"/>
        <dbReference type="ChEBI" id="CHEBI:33738"/>
        <dbReference type="ChEBI" id="CHEBI:128753"/>
        <dbReference type="ChEBI" id="CHEBI:128769"/>
        <dbReference type="EC" id="1.17.7.4"/>
    </reaction>
</comment>
<comment type="catalytic activity">
    <reaction evidence="1">
        <text>dimethylallyl diphosphate + 2 oxidized [2Fe-2S]-[ferredoxin] + H2O = (2E)-4-hydroxy-3-methylbut-2-enyl diphosphate + 2 reduced [2Fe-2S]-[ferredoxin] + 2 H(+)</text>
        <dbReference type="Rhea" id="RHEA:24825"/>
        <dbReference type="Rhea" id="RHEA-COMP:10000"/>
        <dbReference type="Rhea" id="RHEA-COMP:10001"/>
        <dbReference type="ChEBI" id="CHEBI:15377"/>
        <dbReference type="ChEBI" id="CHEBI:15378"/>
        <dbReference type="ChEBI" id="CHEBI:33737"/>
        <dbReference type="ChEBI" id="CHEBI:33738"/>
        <dbReference type="ChEBI" id="CHEBI:57623"/>
        <dbReference type="ChEBI" id="CHEBI:128753"/>
        <dbReference type="EC" id="1.17.7.4"/>
    </reaction>
</comment>
<comment type="cofactor">
    <cofactor evidence="1">
        <name>[4Fe-4S] cluster</name>
        <dbReference type="ChEBI" id="CHEBI:49883"/>
    </cofactor>
    <text evidence="1">Binds 1 [4Fe-4S] cluster per subunit.</text>
</comment>
<comment type="pathway">
    <text evidence="1">Isoprenoid biosynthesis; dimethylallyl diphosphate biosynthesis; dimethylallyl diphosphate from (2E)-4-hydroxy-3-methylbutenyl diphosphate: step 1/1.</text>
</comment>
<comment type="pathway">
    <text evidence="1">Isoprenoid biosynthesis; isopentenyl diphosphate biosynthesis via DXP pathway; isopentenyl diphosphate from 1-deoxy-D-xylulose 5-phosphate: step 6/6.</text>
</comment>
<comment type="similarity">
    <text evidence="1">Belongs to the IspH family.</text>
</comment>
<dbReference type="EC" id="1.17.7.4" evidence="1"/>
<dbReference type="EMBL" id="CP000435">
    <property type="protein sequence ID" value="ABI45510.1"/>
    <property type="molecule type" value="Genomic_DNA"/>
</dbReference>
<dbReference type="RefSeq" id="WP_011618272.1">
    <property type="nucleotide sequence ID" value="NC_008319.1"/>
</dbReference>
<dbReference type="SMR" id="Q0IDE5"/>
<dbReference type="STRING" id="64471.sync_0292"/>
<dbReference type="KEGG" id="syg:sync_0292"/>
<dbReference type="eggNOG" id="COG0761">
    <property type="taxonomic scope" value="Bacteria"/>
</dbReference>
<dbReference type="HOGENOM" id="CLU_027486_4_0_3"/>
<dbReference type="OrthoDB" id="9804077at2"/>
<dbReference type="UniPathway" id="UPA00056">
    <property type="reaction ID" value="UER00097"/>
</dbReference>
<dbReference type="UniPathway" id="UPA00059">
    <property type="reaction ID" value="UER00105"/>
</dbReference>
<dbReference type="Proteomes" id="UP000001961">
    <property type="component" value="Chromosome"/>
</dbReference>
<dbReference type="GO" id="GO:0051539">
    <property type="term" value="F:4 iron, 4 sulfur cluster binding"/>
    <property type="evidence" value="ECO:0007669"/>
    <property type="project" value="UniProtKB-UniRule"/>
</dbReference>
<dbReference type="GO" id="GO:0051745">
    <property type="term" value="F:4-hydroxy-3-methylbut-2-enyl diphosphate reductase activity"/>
    <property type="evidence" value="ECO:0007669"/>
    <property type="project" value="UniProtKB-UniRule"/>
</dbReference>
<dbReference type="GO" id="GO:0046872">
    <property type="term" value="F:metal ion binding"/>
    <property type="evidence" value="ECO:0007669"/>
    <property type="project" value="UniProtKB-KW"/>
</dbReference>
<dbReference type="GO" id="GO:0050992">
    <property type="term" value="P:dimethylallyl diphosphate biosynthetic process"/>
    <property type="evidence" value="ECO:0007669"/>
    <property type="project" value="UniProtKB-UniRule"/>
</dbReference>
<dbReference type="GO" id="GO:0019288">
    <property type="term" value="P:isopentenyl diphosphate biosynthetic process, methylerythritol 4-phosphate pathway"/>
    <property type="evidence" value="ECO:0007669"/>
    <property type="project" value="UniProtKB-UniRule"/>
</dbReference>
<dbReference type="GO" id="GO:0016114">
    <property type="term" value="P:terpenoid biosynthetic process"/>
    <property type="evidence" value="ECO:0007669"/>
    <property type="project" value="UniProtKB-UniRule"/>
</dbReference>
<dbReference type="CDD" id="cd13944">
    <property type="entry name" value="lytB_ispH"/>
    <property type="match status" value="1"/>
</dbReference>
<dbReference type="Gene3D" id="3.40.50.11270">
    <property type="match status" value="1"/>
</dbReference>
<dbReference type="Gene3D" id="3.40.1010.20">
    <property type="entry name" value="4-hydroxy-3-methylbut-2-enyl diphosphate reductase, catalytic domain"/>
    <property type="match status" value="2"/>
</dbReference>
<dbReference type="HAMAP" id="MF_00191">
    <property type="entry name" value="IspH"/>
    <property type="match status" value="1"/>
</dbReference>
<dbReference type="InterPro" id="IPR003451">
    <property type="entry name" value="LytB/IspH"/>
</dbReference>
<dbReference type="NCBIfam" id="TIGR00216">
    <property type="entry name" value="ispH_lytB"/>
    <property type="match status" value="1"/>
</dbReference>
<dbReference type="NCBIfam" id="NF009911">
    <property type="entry name" value="PRK13371.1"/>
    <property type="match status" value="1"/>
</dbReference>
<dbReference type="PANTHER" id="PTHR31619">
    <property type="entry name" value="4-HYDROXY-3-METHYLBUT-2-ENYL DIPHOSPHATE REDUCTASE, CHLOROPLASTIC"/>
    <property type="match status" value="1"/>
</dbReference>
<dbReference type="PANTHER" id="PTHR31619:SF5">
    <property type="entry name" value="4-HYDROXY-3-METHYLBUT-2-ENYL DIPHOSPHATE REDUCTASE, CHLOROPLASTIC"/>
    <property type="match status" value="1"/>
</dbReference>
<dbReference type="Pfam" id="PF02401">
    <property type="entry name" value="LYTB"/>
    <property type="match status" value="1"/>
</dbReference>
<evidence type="ECO:0000255" key="1">
    <source>
        <dbReference type="HAMAP-Rule" id="MF_00191"/>
    </source>
</evidence>
<sequence>MDTHAFKRSLHHSDRYNRRGFGRADEVAGSLEQAYQSSLIGSIRDNGYSLTHGRLKVRLAEAFGFCWGVERAVAMAYETRRHYPQERIWITNEIIHNPSVNDHLREMDVLFISVEGGVKDFSGVATGDVVILPAFGATVQEMQLLNERGCHIVDTTCPWVSKVWTTVEKHKKQSFTSIIHGKVKHEETLATSSFAGTYLVVLDLEEARLVADYILGKGNRESFMERFSKACSPGFDPDRDLEHLGVANQTTMLKSETEEIGRLFERTMLSKYGPTDLNEHFLAFNTICDATQERQDAMFSLVDETVDLMVVIGGYNSSNTTHLQEIAVSRGIRSFHIDTPERIHTDNSIEHKPLGEELTVEELFLPSGPVTVGITSGASTPDRVVEHVIQRLIALSEN</sequence>
<reference key="1">
    <citation type="journal article" date="2006" name="Proc. Natl. Acad. Sci. U.S.A.">
        <title>Genome sequence of Synechococcus CC9311: insights into adaptation to a coastal environment.</title>
        <authorList>
            <person name="Palenik B."/>
            <person name="Ren Q."/>
            <person name="Dupont C.L."/>
            <person name="Myers G.S."/>
            <person name="Heidelberg J.F."/>
            <person name="Badger J.H."/>
            <person name="Madupu R."/>
            <person name="Nelson W.C."/>
            <person name="Brinkac L.M."/>
            <person name="Dodson R.J."/>
            <person name="Durkin A.S."/>
            <person name="Daugherty S.C."/>
            <person name="Sullivan S.A."/>
            <person name="Khouri H."/>
            <person name="Mohamoud Y."/>
            <person name="Halpin R."/>
            <person name="Paulsen I.T."/>
        </authorList>
    </citation>
    <scope>NUCLEOTIDE SEQUENCE [LARGE SCALE GENOMIC DNA]</scope>
    <source>
        <strain>CC9311</strain>
    </source>
</reference>
<proteinExistence type="inferred from homology"/>
<organism>
    <name type="scientific">Synechococcus sp. (strain CC9311)</name>
    <dbReference type="NCBI Taxonomy" id="64471"/>
    <lineage>
        <taxon>Bacteria</taxon>
        <taxon>Bacillati</taxon>
        <taxon>Cyanobacteriota</taxon>
        <taxon>Cyanophyceae</taxon>
        <taxon>Synechococcales</taxon>
        <taxon>Synechococcaceae</taxon>
        <taxon>Synechococcus</taxon>
    </lineage>
</organism>
<accession>Q0IDE5</accession>
<keyword id="KW-0004">4Fe-4S</keyword>
<keyword id="KW-0408">Iron</keyword>
<keyword id="KW-0411">Iron-sulfur</keyword>
<keyword id="KW-0414">Isoprene biosynthesis</keyword>
<keyword id="KW-0479">Metal-binding</keyword>
<keyword id="KW-0560">Oxidoreductase</keyword>
<keyword id="KW-1185">Reference proteome</keyword>
<name>ISPH_SYNS3</name>
<feature type="chain" id="PRO_1000021187" description="4-hydroxy-3-methylbut-2-enyl diphosphate reductase">
    <location>
        <begin position="1"/>
        <end position="398"/>
    </location>
</feature>
<feature type="active site" description="Proton donor" evidence="1">
    <location>
        <position position="187"/>
    </location>
</feature>
<feature type="binding site" evidence="1">
    <location>
        <position position="66"/>
    </location>
    <ligand>
        <name>[4Fe-4S] cluster</name>
        <dbReference type="ChEBI" id="CHEBI:49883"/>
    </ligand>
</feature>
<feature type="binding site" evidence="1">
    <location>
        <position position="96"/>
    </location>
    <ligand>
        <name>(2E)-4-hydroxy-3-methylbut-2-enyl diphosphate</name>
        <dbReference type="ChEBI" id="CHEBI:128753"/>
    </ligand>
</feature>
<feature type="binding site" evidence="1">
    <location>
        <position position="96"/>
    </location>
    <ligand>
        <name>dimethylallyl diphosphate</name>
        <dbReference type="ChEBI" id="CHEBI:57623"/>
    </ligand>
</feature>
<feature type="binding site" evidence="1">
    <location>
        <position position="96"/>
    </location>
    <ligand>
        <name>isopentenyl diphosphate</name>
        <dbReference type="ChEBI" id="CHEBI:128769"/>
    </ligand>
</feature>
<feature type="binding site" evidence="1">
    <location>
        <position position="157"/>
    </location>
    <ligand>
        <name>[4Fe-4S] cluster</name>
        <dbReference type="ChEBI" id="CHEBI:49883"/>
    </ligand>
</feature>
<feature type="binding site" evidence="1">
    <location>
        <position position="185"/>
    </location>
    <ligand>
        <name>(2E)-4-hydroxy-3-methylbut-2-enyl diphosphate</name>
        <dbReference type="ChEBI" id="CHEBI:128753"/>
    </ligand>
</feature>
<feature type="binding site" evidence="1">
    <location>
        <position position="185"/>
    </location>
    <ligand>
        <name>dimethylallyl diphosphate</name>
        <dbReference type="ChEBI" id="CHEBI:57623"/>
    </ligand>
</feature>
<feature type="binding site" evidence="1">
    <location>
        <position position="185"/>
    </location>
    <ligand>
        <name>isopentenyl diphosphate</name>
        <dbReference type="ChEBI" id="CHEBI:128769"/>
    </ligand>
</feature>
<feature type="binding site" evidence="1">
    <location>
        <position position="250"/>
    </location>
    <ligand>
        <name>(2E)-4-hydroxy-3-methylbut-2-enyl diphosphate</name>
        <dbReference type="ChEBI" id="CHEBI:128753"/>
    </ligand>
</feature>
<feature type="binding site" evidence="1">
    <location>
        <position position="288"/>
    </location>
    <ligand>
        <name>[4Fe-4S] cluster</name>
        <dbReference type="ChEBI" id="CHEBI:49883"/>
    </ligand>
</feature>
<feature type="binding site" evidence="1">
    <location>
        <position position="317"/>
    </location>
    <ligand>
        <name>(2E)-4-hydroxy-3-methylbut-2-enyl diphosphate</name>
        <dbReference type="ChEBI" id="CHEBI:128753"/>
    </ligand>
</feature>
<feature type="binding site" evidence="1">
    <location>
        <position position="317"/>
    </location>
    <ligand>
        <name>dimethylallyl diphosphate</name>
        <dbReference type="ChEBI" id="CHEBI:57623"/>
    </ligand>
</feature>
<feature type="binding site" evidence="1">
    <location>
        <position position="317"/>
    </location>
    <ligand>
        <name>isopentenyl diphosphate</name>
        <dbReference type="ChEBI" id="CHEBI:128769"/>
    </ligand>
</feature>
<feature type="binding site" evidence="1">
    <location>
        <position position="318"/>
    </location>
    <ligand>
        <name>(2E)-4-hydroxy-3-methylbut-2-enyl diphosphate</name>
        <dbReference type="ChEBI" id="CHEBI:128753"/>
    </ligand>
</feature>
<feature type="binding site" evidence="1">
    <location>
        <position position="318"/>
    </location>
    <ligand>
        <name>dimethylallyl diphosphate</name>
        <dbReference type="ChEBI" id="CHEBI:57623"/>
    </ligand>
</feature>
<feature type="binding site" evidence="1">
    <location>
        <position position="318"/>
    </location>
    <ligand>
        <name>isopentenyl diphosphate</name>
        <dbReference type="ChEBI" id="CHEBI:128769"/>
    </ligand>
</feature>
<feature type="binding site" evidence="1">
    <location>
        <position position="319"/>
    </location>
    <ligand>
        <name>(2E)-4-hydroxy-3-methylbut-2-enyl diphosphate</name>
        <dbReference type="ChEBI" id="CHEBI:128753"/>
    </ligand>
</feature>
<feature type="binding site" evidence="1">
    <location>
        <position position="319"/>
    </location>
    <ligand>
        <name>dimethylallyl diphosphate</name>
        <dbReference type="ChEBI" id="CHEBI:57623"/>
    </ligand>
</feature>
<feature type="binding site" evidence="1">
    <location>
        <position position="319"/>
    </location>
    <ligand>
        <name>isopentenyl diphosphate</name>
        <dbReference type="ChEBI" id="CHEBI:128769"/>
    </ligand>
</feature>
<feature type="binding site" evidence="1">
    <location>
        <position position="379"/>
    </location>
    <ligand>
        <name>(2E)-4-hydroxy-3-methylbut-2-enyl diphosphate</name>
        <dbReference type="ChEBI" id="CHEBI:128753"/>
    </ligand>
</feature>
<feature type="binding site" evidence="1">
    <location>
        <position position="379"/>
    </location>
    <ligand>
        <name>dimethylallyl diphosphate</name>
        <dbReference type="ChEBI" id="CHEBI:57623"/>
    </ligand>
</feature>
<feature type="binding site" evidence="1">
    <location>
        <position position="379"/>
    </location>
    <ligand>
        <name>isopentenyl diphosphate</name>
        <dbReference type="ChEBI" id="CHEBI:128769"/>
    </ligand>
</feature>